<comment type="function">
    <text evidence="1">Catalyzes the transfer of sulfate to position 3 of terminal glucuronic acid of both protein- and lipid-linked oligosaccharides. Participates in biosynthesis of HNK-1 carbohydrate structure, a sulfated glucuronyl-lactosaminyl residue carried by many neural recognition molecules (By similarity).</text>
</comment>
<comment type="subcellular location">
    <subcellularLocation>
        <location evidence="1">Golgi apparatus membrane</location>
        <topology evidence="1">Single-pass type II membrane protein</topology>
    </subcellularLocation>
</comment>
<comment type="similarity">
    <text evidence="3">Belongs to the sulfotransferase 2 family.</text>
</comment>
<sequence>MHHRWLLLVACFWVLFMLMVASKLITLTMKDPEGYGNKQGPLTVLPETEKIAVAETTKLQIESQPTTNSLKDESYTVLLHKERTELLRSVCSNGSLRNLSHTAISKFVLDRIFVSDKHRILFCQTPKVGNTQWKKVLIVLNGAFSSIEEIPENVVHDHEKNGLPRLSSFSAQDVHERLNSYFKFFIVRDPFERLISAFKDKFVHNPRFEPWYKHDIAPAIIRKYRKDRRESRGGLQFQDFVRYLGDPNHRFLDLQFGDHIIHWVTYVELCAPCEIDYNVIGHHETLEDDAPYILREAGIEHLVSYPTIPPGITKYNKSKVENYFSKVSKRDIRRLYTRFERDFKLFGYKEPTFLF</sequence>
<organism>
    <name type="scientific">Xenopus laevis</name>
    <name type="common">African clawed frog</name>
    <dbReference type="NCBI Taxonomy" id="8355"/>
    <lineage>
        <taxon>Eukaryota</taxon>
        <taxon>Metazoa</taxon>
        <taxon>Chordata</taxon>
        <taxon>Craniata</taxon>
        <taxon>Vertebrata</taxon>
        <taxon>Euteleostomi</taxon>
        <taxon>Amphibia</taxon>
        <taxon>Batrachia</taxon>
        <taxon>Anura</taxon>
        <taxon>Pipoidea</taxon>
        <taxon>Pipidae</taxon>
        <taxon>Xenopodinae</taxon>
        <taxon>Xenopus</taxon>
        <taxon>Xenopus</taxon>
    </lineage>
</organism>
<gene>
    <name type="primary">chst10</name>
</gene>
<evidence type="ECO:0000250" key="1"/>
<evidence type="ECO:0000255" key="2"/>
<evidence type="ECO:0000305" key="3"/>
<proteinExistence type="evidence at transcript level"/>
<keyword id="KW-0119">Carbohydrate metabolism</keyword>
<keyword id="KW-0325">Glycoprotein</keyword>
<keyword id="KW-0333">Golgi apparatus</keyword>
<keyword id="KW-0472">Membrane</keyword>
<keyword id="KW-1185">Reference proteome</keyword>
<keyword id="KW-0735">Signal-anchor</keyword>
<keyword id="KW-0808">Transferase</keyword>
<keyword id="KW-0812">Transmembrane</keyword>
<keyword id="KW-1133">Transmembrane helix</keyword>
<name>CHSTA_XENLA</name>
<protein>
    <recommendedName>
        <fullName>Carbohydrate sulfotransferase 10</fullName>
        <ecNumber>2.8.2.-</ecNumber>
    </recommendedName>
    <alternativeName>
        <fullName>HNK-1 sulfotransferase</fullName>
        <shortName>HNK-1ST</shortName>
        <shortName>HNK1ST</shortName>
    </alternativeName>
</protein>
<reference key="1">
    <citation type="submission" date="2004-06" db="EMBL/GenBank/DDBJ databases">
        <authorList>
            <consortium name="NIH - Xenopus Gene Collection (XGC) project"/>
        </authorList>
    </citation>
    <scope>NUCLEOTIDE SEQUENCE [LARGE SCALE MRNA]</scope>
    <source>
        <tissue>Embryo</tissue>
    </source>
</reference>
<accession>Q6GNS1</accession>
<dbReference type="EC" id="2.8.2.-"/>
<dbReference type="EMBL" id="BC073432">
    <property type="protein sequence ID" value="AAH73432.1"/>
    <property type="molecule type" value="mRNA"/>
</dbReference>
<dbReference type="RefSeq" id="NP_001085854.1">
    <property type="nucleotide sequence ID" value="NM_001092385.1"/>
</dbReference>
<dbReference type="GlyCosmos" id="Q6GNS1">
    <property type="glycosylation" value="3 sites, No reported glycans"/>
</dbReference>
<dbReference type="DNASU" id="444281"/>
<dbReference type="GeneID" id="444281"/>
<dbReference type="KEGG" id="xla:444281"/>
<dbReference type="AGR" id="Xenbase:XB-GENE-5856012"/>
<dbReference type="CTD" id="444281"/>
<dbReference type="Xenbase" id="XB-GENE-5856012">
    <property type="gene designation" value="chst10.L"/>
</dbReference>
<dbReference type="OMA" id="HWPEEFQ"/>
<dbReference type="OrthoDB" id="2019940at2759"/>
<dbReference type="Proteomes" id="UP000186698">
    <property type="component" value="Chromosome 2L"/>
</dbReference>
<dbReference type="Bgee" id="444281">
    <property type="expression patterns" value="Expressed in blastula and 19 other cell types or tissues"/>
</dbReference>
<dbReference type="GO" id="GO:0000139">
    <property type="term" value="C:Golgi membrane"/>
    <property type="evidence" value="ECO:0007669"/>
    <property type="project" value="UniProtKB-SubCell"/>
</dbReference>
<dbReference type="GO" id="GO:0008146">
    <property type="term" value="F:sulfotransferase activity"/>
    <property type="evidence" value="ECO:0000318"/>
    <property type="project" value="GO_Central"/>
</dbReference>
<dbReference type="GO" id="GO:0016051">
    <property type="term" value="P:carbohydrate biosynthetic process"/>
    <property type="evidence" value="ECO:0007669"/>
    <property type="project" value="InterPro"/>
</dbReference>
<dbReference type="GO" id="GO:0030166">
    <property type="term" value="P:proteoglycan biosynthetic process"/>
    <property type="evidence" value="ECO:0000318"/>
    <property type="project" value="GO_Central"/>
</dbReference>
<dbReference type="InterPro" id="IPR018011">
    <property type="entry name" value="Carb_sulfotrans_8-10"/>
</dbReference>
<dbReference type="InterPro" id="IPR027417">
    <property type="entry name" value="P-loop_NTPase"/>
</dbReference>
<dbReference type="InterPro" id="IPR005331">
    <property type="entry name" value="Sulfotransferase"/>
</dbReference>
<dbReference type="PANTHER" id="PTHR12137">
    <property type="entry name" value="CARBOHYDRATE SULFOTRANSFERASE"/>
    <property type="match status" value="1"/>
</dbReference>
<dbReference type="PANTHER" id="PTHR12137:SF2">
    <property type="entry name" value="CARBOHYDRATE SULFOTRANSFERASE 10"/>
    <property type="match status" value="1"/>
</dbReference>
<dbReference type="Pfam" id="PF03567">
    <property type="entry name" value="Sulfotransfer_2"/>
    <property type="match status" value="1"/>
</dbReference>
<dbReference type="SUPFAM" id="SSF52540">
    <property type="entry name" value="P-loop containing nucleoside triphosphate hydrolases"/>
    <property type="match status" value="1"/>
</dbReference>
<feature type="chain" id="PRO_0000189663" description="Carbohydrate sulfotransferase 10">
    <location>
        <begin position="1"/>
        <end position="355"/>
    </location>
</feature>
<feature type="topological domain" description="Cytoplasmic" evidence="2">
    <location>
        <begin position="1"/>
        <end position="6"/>
    </location>
</feature>
<feature type="transmembrane region" description="Helical; Signal-anchor for type II membrane protein" evidence="2">
    <location>
        <begin position="7"/>
        <end position="27"/>
    </location>
</feature>
<feature type="topological domain" description="Lumenal" evidence="2">
    <location>
        <begin position="28"/>
        <end position="355"/>
    </location>
</feature>
<feature type="binding site" evidence="1">
    <location>
        <begin position="126"/>
        <end position="132"/>
    </location>
    <ligand>
        <name>3'-phosphoadenylyl sulfate</name>
        <dbReference type="ChEBI" id="CHEBI:58339"/>
    </ligand>
</feature>
<feature type="binding site" evidence="1">
    <location>
        <begin position="188"/>
        <end position="196"/>
    </location>
    <ligand>
        <name>3'-phosphoadenylyl sulfate</name>
        <dbReference type="ChEBI" id="CHEBI:58339"/>
    </ligand>
</feature>
<feature type="glycosylation site" description="N-linked (GlcNAc...) asparagine" evidence="2">
    <location>
        <position position="93"/>
    </location>
</feature>
<feature type="glycosylation site" description="N-linked (GlcNAc...) asparagine" evidence="2">
    <location>
        <position position="98"/>
    </location>
</feature>
<feature type="glycosylation site" description="N-linked (GlcNAc...) asparagine" evidence="2">
    <location>
        <position position="316"/>
    </location>
</feature>